<keyword id="KW-0067">ATP-binding</keyword>
<keyword id="KW-0963">Cytoplasm</keyword>
<keyword id="KW-0418">Kinase</keyword>
<keyword id="KW-0547">Nucleotide-binding</keyword>
<keyword id="KW-0665">Pyrimidine biosynthesis</keyword>
<keyword id="KW-1185">Reference proteome</keyword>
<keyword id="KW-0808">Transferase</keyword>
<accession>Q2S6J2</accession>
<evidence type="ECO:0000255" key="1">
    <source>
        <dbReference type="HAMAP-Rule" id="MF_01220"/>
    </source>
</evidence>
<reference key="1">
    <citation type="journal article" date="2005" name="Proc. Natl. Acad. Sci. U.S.A.">
        <title>The genome of Salinibacter ruber: convergence and gene exchange among hyperhalophilic bacteria and archaea.</title>
        <authorList>
            <person name="Mongodin E.F."/>
            <person name="Nelson K.E."/>
            <person name="Daugherty S."/>
            <person name="DeBoy R.T."/>
            <person name="Wister J."/>
            <person name="Khouri H."/>
            <person name="Weidman J."/>
            <person name="Walsh D.A."/>
            <person name="Papke R.T."/>
            <person name="Sanchez Perez G."/>
            <person name="Sharma A.K."/>
            <person name="Nesbo C.L."/>
            <person name="MacLeod D."/>
            <person name="Bapteste E."/>
            <person name="Doolittle W.F."/>
            <person name="Charlebois R.L."/>
            <person name="Legault B."/>
            <person name="Rodriguez-Valera F."/>
        </authorList>
    </citation>
    <scope>NUCLEOTIDE SEQUENCE [LARGE SCALE GENOMIC DNA]</scope>
    <source>
        <strain>DSM 13855 / CECT 5946 / M31</strain>
    </source>
</reference>
<gene>
    <name evidence="1" type="primary">pyrH</name>
    <name type="ordered locus">SRU_0034</name>
</gene>
<feature type="chain" id="PRO_0000323950" description="Uridylate kinase">
    <location>
        <begin position="1"/>
        <end position="259"/>
    </location>
</feature>
<feature type="binding site" evidence="1">
    <location>
        <begin position="21"/>
        <end position="24"/>
    </location>
    <ligand>
        <name>ATP</name>
        <dbReference type="ChEBI" id="CHEBI:30616"/>
    </ligand>
</feature>
<feature type="binding site" evidence="1">
    <location>
        <position position="63"/>
    </location>
    <ligand>
        <name>UMP</name>
        <dbReference type="ChEBI" id="CHEBI:57865"/>
    </ligand>
</feature>
<feature type="binding site" evidence="1">
    <location>
        <position position="64"/>
    </location>
    <ligand>
        <name>ATP</name>
        <dbReference type="ChEBI" id="CHEBI:30616"/>
    </ligand>
</feature>
<feature type="binding site" evidence="1">
    <location>
        <position position="68"/>
    </location>
    <ligand>
        <name>ATP</name>
        <dbReference type="ChEBI" id="CHEBI:30616"/>
    </ligand>
</feature>
<feature type="binding site" evidence="1">
    <location>
        <position position="83"/>
    </location>
    <ligand>
        <name>UMP</name>
        <dbReference type="ChEBI" id="CHEBI:57865"/>
    </ligand>
</feature>
<feature type="binding site" evidence="1">
    <location>
        <begin position="144"/>
        <end position="151"/>
    </location>
    <ligand>
        <name>UMP</name>
        <dbReference type="ChEBI" id="CHEBI:57865"/>
    </ligand>
</feature>
<feature type="binding site" evidence="1">
    <location>
        <position position="171"/>
    </location>
    <ligand>
        <name>ATP</name>
        <dbReference type="ChEBI" id="CHEBI:30616"/>
    </ligand>
</feature>
<feature type="binding site" evidence="1">
    <location>
        <position position="177"/>
    </location>
    <ligand>
        <name>ATP</name>
        <dbReference type="ChEBI" id="CHEBI:30616"/>
    </ligand>
</feature>
<feature type="binding site" evidence="1">
    <location>
        <position position="180"/>
    </location>
    <ligand>
        <name>ATP</name>
        <dbReference type="ChEBI" id="CHEBI:30616"/>
    </ligand>
</feature>
<comment type="function">
    <text evidence="1">Catalyzes the reversible phosphorylation of UMP to UDP.</text>
</comment>
<comment type="catalytic activity">
    <reaction evidence="1">
        <text>UMP + ATP = UDP + ADP</text>
        <dbReference type="Rhea" id="RHEA:24400"/>
        <dbReference type="ChEBI" id="CHEBI:30616"/>
        <dbReference type="ChEBI" id="CHEBI:57865"/>
        <dbReference type="ChEBI" id="CHEBI:58223"/>
        <dbReference type="ChEBI" id="CHEBI:456216"/>
        <dbReference type="EC" id="2.7.4.22"/>
    </reaction>
</comment>
<comment type="activity regulation">
    <text evidence="1">Inhibited by UTP.</text>
</comment>
<comment type="pathway">
    <text evidence="1">Pyrimidine metabolism; CTP biosynthesis via de novo pathway; UDP from UMP (UMPK route): step 1/1.</text>
</comment>
<comment type="subunit">
    <text evidence="1">Homohexamer.</text>
</comment>
<comment type="subcellular location">
    <subcellularLocation>
        <location evidence="1">Cytoplasm</location>
    </subcellularLocation>
</comment>
<comment type="similarity">
    <text evidence="1">Belongs to the UMP kinase family.</text>
</comment>
<sequence>MSASPDDESTSSLDHQRVLLKLSGQALLGDREFGIDEAVLRTYANEVKTAVEAGAEVAVVIGGGNIFRGVEHAMEGMTRAHADYMGMLATMINGMALQDAFEQVDLVTRLQSSIKMEEIAEPFIRRRAIRHLEKGRVVIFGAGTGNPYFTTDTAAALRGLEIDADVILKGTRVDGIFTADPEEDASAERFKQIHGQEVIDRDLRVMDMTALTLCQESKMPIVVFNMGTSNNLRRLLEGETVGTHVHWDEAKASTERVPA</sequence>
<proteinExistence type="inferred from homology"/>
<dbReference type="EC" id="2.7.4.22" evidence="1"/>
<dbReference type="EMBL" id="CP000159">
    <property type="protein sequence ID" value="ABC46216.1"/>
    <property type="molecule type" value="Genomic_DNA"/>
</dbReference>
<dbReference type="RefSeq" id="WP_011402822.1">
    <property type="nucleotide sequence ID" value="NC_007677.1"/>
</dbReference>
<dbReference type="RefSeq" id="YP_444189.1">
    <property type="nucleotide sequence ID" value="NC_007677.1"/>
</dbReference>
<dbReference type="SMR" id="Q2S6J2"/>
<dbReference type="STRING" id="309807.SRU_0034"/>
<dbReference type="EnsemblBacteria" id="ABC46216">
    <property type="protein sequence ID" value="ABC46216"/>
    <property type="gene ID" value="SRU_0034"/>
</dbReference>
<dbReference type="GeneID" id="83726864"/>
<dbReference type="KEGG" id="sru:SRU_0034"/>
<dbReference type="PATRIC" id="fig|309807.25.peg.31"/>
<dbReference type="eggNOG" id="COG0528">
    <property type="taxonomic scope" value="Bacteria"/>
</dbReference>
<dbReference type="HOGENOM" id="CLU_033861_0_0_10"/>
<dbReference type="OrthoDB" id="9807458at2"/>
<dbReference type="UniPathway" id="UPA00159">
    <property type="reaction ID" value="UER00275"/>
</dbReference>
<dbReference type="Proteomes" id="UP000008674">
    <property type="component" value="Chromosome"/>
</dbReference>
<dbReference type="GO" id="GO:0005737">
    <property type="term" value="C:cytoplasm"/>
    <property type="evidence" value="ECO:0007669"/>
    <property type="project" value="UniProtKB-SubCell"/>
</dbReference>
<dbReference type="GO" id="GO:0005524">
    <property type="term" value="F:ATP binding"/>
    <property type="evidence" value="ECO:0007669"/>
    <property type="project" value="UniProtKB-KW"/>
</dbReference>
<dbReference type="GO" id="GO:0033862">
    <property type="term" value="F:UMP kinase activity"/>
    <property type="evidence" value="ECO:0007669"/>
    <property type="project" value="UniProtKB-EC"/>
</dbReference>
<dbReference type="GO" id="GO:0044210">
    <property type="term" value="P:'de novo' CTP biosynthetic process"/>
    <property type="evidence" value="ECO:0007669"/>
    <property type="project" value="UniProtKB-UniRule"/>
</dbReference>
<dbReference type="GO" id="GO:0006225">
    <property type="term" value="P:UDP biosynthetic process"/>
    <property type="evidence" value="ECO:0007669"/>
    <property type="project" value="TreeGrafter"/>
</dbReference>
<dbReference type="CDD" id="cd04254">
    <property type="entry name" value="AAK_UMPK-PyrH-Ec"/>
    <property type="match status" value="1"/>
</dbReference>
<dbReference type="FunFam" id="3.40.1160.10:FF:000001">
    <property type="entry name" value="Uridylate kinase"/>
    <property type="match status" value="1"/>
</dbReference>
<dbReference type="Gene3D" id="3.40.1160.10">
    <property type="entry name" value="Acetylglutamate kinase-like"/>
    <property type="match status" value="1"/>
</dbReference>
<dbReference type="HAMAP" id="MF_01220_B">
    <property type="entry name" value="PyrH_B"/>
    <property type="match status" value="1"/>
</dbReference>
<dbReference type="InterPro" id="IPR036393">
    <property type="entry name" value="AceGlu_kinase-like_sf"/>
</dbReference>
<dbReference type="InterPro" id="IPR001048">
    <property type="entry name" value="Asp/Glu/Uridylate_kinase"/>
</dbReference>
<dbReference type="InterPro" id="IPR011817">
    <property type="entry name" value="Uridylate_kinase"/>
</dbReference>
<dbReference type="InterPro" id="IPR015963">
    <property type="entry name" value="Uridylate_kinase_bac"/>
</dbReference>
<dbReference type="NCBIfam" id="TIGR02075">
    <property type="entry name" value="pyrH_bact"/>
    <property type="match status" value="1"/>
</dbReference>
<dbReference type="PANTHER" id="PTHR42833">
    <property type="entry name" value="URIDYLATE KINASE"/>
    <property type="match status" value="1"/>
</dbReference>
<dbReference type="PANTHER" id="PTHR42833:SF4">
    <property type="entry name" value="URIDYLATE KINASE PUMPKIN, CHLOROPLASTIC"/>
    <property type="match status" value="1"/>
</dbReference>
<dbReference type="Pfam" id="PF00696">
    <property type="entry name" value="AA_kinase"/>
    <property type="match status" value="1"/>
</dbReference>
<dbReference type="PIRSF" id="PIRSF005650">
    <property type="entry name" value="Uridylate_kin"/>
    <property type="match status" value="1"/>
</dbReference>
<dbReference type="SUPFAM" id="SSF53633">
    <property type="entry name" value="Carbamate kinase-like"/>
    <property type="match status" value="1"/>
</dbReference>
<organism>
    <name type="scientific">Salinibacter ruber (strain DSM 13855 / M31)</name>
    <dbReference type="NCBI Taxonomy" id="309807"/>
    <lineage>
        <taxon>Bacteria</taxon>
        <taxon>Pseudomonadati</taxon>
        <taxon>Rhodothermota</taxon>
        <taxon>Rhodothermia</taxon>
        <taxon>Rhodothermales</taxon>
        <taxon>Salinibacteraceae</taxon>
        <taxon>Salinibacter</taxon>
    </lineage>
</organism>
<name>PYRH_SALRD</name>
<protein>
    <recommendedName>
        <fullName evidence="1">Uridylate kinase</fullName>
        <shortName evidence="1">UK</shortName>
        <ecNumber evidence="1">2.7.4.22</ecNumber>
    </recommendedName>
    <alternativeName>
        <fullName evidence="1">Uridine monophosphate kinase</fullName>
        <shortName evidence="1">UMP kinase</shortName>
        <shortName evidence="1">UMPK</shortName>
    </alternativeName>
</protein>